<keyword id="KW-0963">Cytoplasm</keyword>
<keyword id="KW-0324">Glycolysis</keyword>
<keyword id="KW-0520">NAD</keyword>
<keyword id="KW-0560">Oxidoreductase</keyword>
<proteinExistence type="evidence at transcript level"/>
<protein>
    <recommendedName>
        <fullName>Glyceraldehyde-3-phosphate dehydrogenase 1, cytosolic</fullName>
        <ecNumber>1.2.1.12</ecNumber>
    </recommendedName>
</protein>
<feature type="chain" id="PRO_0000145602" description="Glyceraldehyde-3-phosphate dehydrogenase 1, cytosolic">
    <location>
        <begin position="1"/>
        <end position="337"/>
    </location>
</feature>
<feature type="active site" description="Nucleophile" evidence="2">
    <location>
        <position position="154"/>
    </location>
</feature>
<feature type="binding site" evidence="1">
    <location>
        <begin position="13"/>
        <end position="14"/>
    </location>
    <ligand>
        <name>NAD(+)</name>
        <dbReference type="ChEBI" id="CHEBI:57540"/>
    </ligand>
</feature>
<feature type="binding site" evidence="1">
    <location>
        <position position="35"/>
    </location>
    <ligand>
        <name>NAD(+)</name>
        <dbReference type="ChEBI" id="CHEBI:57540"/>
    </ligand>
</feature>
<feature type="binding site" evidence="1">
    <location>
        <position position="82"/>
    </location>
    <ligand>
        <name>NAD(+)</name>
        <dbReference type="ChEBI" id="CHEBI:57540"/>
    </ligand>
</feature>
<feature type="binding site" evidence="1">
    <location>
        <begin position="153"/>
        <end position="155"/>
    </location>
    <ligand>
        <name>D-glyceraldehyde 3-phosphate</name>
        <dbReference type="ChEBI" id="CHEBI:59776"/>
    </ligand>
</feature>
<feature type="binding site" evidence="1">
    <location>
        <position position="184"/>
    </location>
    <ligand>
        <name>D-glyceraldehyde 3-phosphate</name>
        <dbReference type="ChEBI" id="CHEBI:59776"/>
    </ligand>
</feature>
<feature type="binding site" evidence="1">
    <location>
        <begin position="213"/>
        <end position="214"/>
    </location>
    <ligand>
        <name>D-glyceraldehyde 3-phosphate</name>
        <dbReference type="ChEBI" id="CHEBI:59776"/>
    </ligand>
</feature>
<feature type="binding site" evidence="1">
    <location>
        <position position="236"/>
    </location>
    <ligand>
        <name>D-glyceraldehyde 3-phosphate</name>
        <dbReference type="ChEBI" id="CHEBI:59776"/>
    </ligand>
</feature>
<feature type="binding site" evidence="1">
    <location>
        <position position="318"/>
    </location>
    <ligand>
        <name>NAD(+)</name>
        <dbReference type="ChEBI" id="CHEBI:57540"/>
    </ligand>
</feature>
<feature type="site" description="Activates thiol group during catalysis" evidence="1">
    <location>
        <position position="181"/>
    </location>
</feature>
<dbReference type="EC" id="1.2.1.12"/>
<dbReference type="EMBL" id="X60343">
    <property type="protein sequence ID" value="CAA42901.1"/>
    <property type="molecule type" value="mRNA"/>
</dbReference>
<dbReference type="PIR" id="S18482">
    <property type="entry name" value="DEBHG"/>
</dbReference>
<dbReference type="SMR" id="P26517"/>
<dbReference type="UniPathway" id="UPA00109">
    <property type="reaction ID" value="UER00184"/>
</dbReference>
<dbReference type="ExpressionAtlas" id="P26517">
    <property type="expression patterns" value="baseline and differential"/>
</dbReference>
<dbReference type="GO" id="GO:0005829">
    <property type="term" value="C:cytosol"/>
    <property type="evidence" value="ECO:0007669"/>
    <property type="project" value="TreeGrafter"/>
</dbReference>
<dbReference type="GO" id="GO:0004365">
    <property type="term" value="F:glyceraldehyde-3-phosphate dehydrogenase (NAD+) (phosphorylating) activity"/>
    <property type="evidence" value="ECO:0007669"/>
    <property type="project" value="UniProtKB-EC"/>
</dbReference>
<dbReference type="GO" id="GO:0051287">
    <property type="term" value="F:NAD binding"/>
    <property type="evidence" value="ECO:0007669"/>
    <property type="project" value="InterPro"/>
</dbReference>
<dbReference type="GO" id="GO:0050661">
    <property type="term" value="F:NADP binding"/>
    <property type="evidence" value="ECO:0007669"/>
    <property type="project" value="InterPro"/>
</dbReference>
<dbReference type="GO" id="GO:0006006">
    <property type="term" value="P:glucose metabolic process"/>
    <property type="evidence" value="ECO:0007669"/>
    <property type="project" value="InterPro"/>
</dbReference>
<dbReference type="GO" id="GO:0006096">
    <property type="term" value="P:glycolytic process"/>
    <property type="evidence" value="ECO:0007669"/>
    <property type="project" value="UniProtKB-UniPathway"/>
</dbReference>
<dbReference type="CDD" id="cd18126">
    <property type="entry name" value="GAPDH_I_C"/>
    <property type="match status" value="1"/>
</dbReference>
<dbReference type="CDD" id="cd05214">
    <property type="entry name" value="GAPDH_I_N"/>
    <property type="match status" value="1"/>
</dbReference>
<dbReference type="FunFam" id="3.30.360.10:FF:000001">
    <property type="entry name" value="Glyceraldehyde-3-phosphate dehydrogenase"/>
    <property type="match status" value="1"/>
</dbReference>
<dbReference type="FunFam" id="3.40.50.720:FF:000020">
    <property type="entry name" value="Glyceraldehyde-3-phosphate dehydrogenase"/>
    <property type="match status" value="1"/>
</dbReference>
<dbReference type="Gene3D" id="3.30.360.10">
    <property type="entry name" value="Dihydrodipicolinate Reductase, domain 2"/>
    <property type="match status" value="1"/>
</dbReference>
<dbReference type="Gene3D" id="3.40.50.720">
    <property type="entry name" value="NAD(P)-binding Rossmann-like Domain"/>
    <property type="match status" value="1"/>
</dbReference>
<dbReference type="InterPro" id="IPR020831">
    <property type="entry name" value="GlycerAld/Erythrose_P_DH"/>
</dbReference>
<dbReference type="InterPro" id="IPR020830">
    <property type="entry name" value="GlycerAld_3-P_DH_AS"/>
</dbReference>
<dbReference type="InterPro" id="IPR020829">
    <property type="entry name" value="GlycerAld_3-P_DH_cat"/>
</dbReference>
<dbReference type="InterPro" id="IPR020828">
    <property type="entry name" value="GlycerAld_3-P_DH_NAD(P)-bd"/>
</dbReference>
<dbReference type="InterPro" id="IPR006424">
    <property type="entry name" value="Glyceraldehyde-3-P_DH_1"/>
</dbReference>
<dbReference type="InterPro" id="IPR036291">
    <property type="entry name" value="NAD(P)-bd_dom_sf"/>
</dbReference>
<dbReference type="NCBIfam" id="TIGR01534">
    <property type="entry name" value="GAPDH-I"/>
    <property type="match status" value="1"/>
</dbReference>
<dbReference type="PANTHER" id="PTHR10836">
    <property type="entry name" value="GLYCERALDEHYDE 3-PHOSPHATE DEHYDROGENASE"/>
    <property type="match status" value="1"/>
</dbReference>
<dbReference type="PANTHER" id="PTHR10836:SF133">
    <property type="entry name" value="GLYCERALDEHYDE-3-PHOSPHATE DEHYDROGENASE 1, CYTOSOLIC"/>
    <property type="match status" value="1"/>
</dbReference>
<dbReference type="Pfam" id="PF02800">
    <property type="entry name" value="Gp_dh_C"/>
    <property type="match status" value="1"/>
</dbReference>
<dbReference type="Pfam" id="PF00044">
    <property type="entry name" value="Gp_dh_N"/>
    <property type="match status" value="1"/>
</dbReference>
<dbReference type="PIRSF" id="PIRSF000149">
    <property type="entry name" value="GAP_DH"/>
    <property type="match status" value="1"/>
</dbReference>
<dbReference type="PRINTS" id="PR00078">
    <property type="entry name" value="G3PDHDRGNASE"/>
</dbReference>
<dbReference type="SMART" id="SM00846">
    <property type="entry name" value="Gp_dh_N"/>
    <property type="match status" value="1"/>
</dbReference>
<dbReference type="SUPFAM" id="SSF55347">
    <property type="entry name" value="Glyceraldehyde-3-phosphate dehydrogenase-like, C-terminal domain"/>
    <property type="match status" value="1"/>
</dbReference>
<dbReference type="SUPFAM" id="SSF51735">
    <property type="entry name" value="NAD(P)-binding Rossmann-fold domains"/>
    <property type="match status" value="1"/>
</dbReference>
<dbReference type="PROSITE" id="PS00071">
    <property type="entry name" value="GAPDH"/>
    <property type="match status" value="1"/>
</dbReference>
<accession>P26517</accession>
<evidence type="ECO:0000250" key="1"/>
<evidence type="ECO:0000255" key="2">
    <source>
        <dbReference type="PROSITE-ProRule" id="PRU10009"/>
    </source>
</evidence>
<evidence type="ECO:0000305" key="3"/>
<gene>
    <name type="primary">GAPC</name>
</gene>
<organism>
    <name type="scientific">Hordeum vulgare</name>
    <name type="common">Barley</name>
    <dbReference type="NCBI Taxonomy" id="4513"/>
    <lineage>
        <taxon>Eukaryota</taxon>
        <taxon>Viridiplantae</taxon>
        <taxon>Streptophyta</taxon>
        <taxon>Embryophyta</taxon>
        <taxon>Tracheophyta</taxon>
        <taxon>Spermatophyta</taxon>
        <taxon>Magnoliopsida</taxon>
        <taxon>Liliopsida</taxon>
        <taxon>Poales</taxon>
        <taxon>Poaceae</taxon>
        <taxon>BOP clade</taxon>
        <taxon>Pooideae</taxon>
        <taxon>Triticodae</taxon>
        <taxon>Triticeae</taxon>
        <taxon>Hordeinae</taxon>
        <taxon>Hordeum</taxon>
    </lineage>
</organism>
<name>G3PC1_HORVU</name>
<reference key="1">
    <citation type="journal article" date="1989" name="Nature">
        <title>Molecular evidence for pre-Cretaceous angiosperm origins.</title>
        <authorList>
            <person name="Martin W."/>
            <person name="Gierl A."/>
            <person name="Saedler H."/>
        </authorList>
    </citation>
    <scope>NUCLEOTIDE SEQUENCE [MRNA]</scope>
</reference>
<comment type="function">
    <text evidence="1">Key enzyme in glycolysis that catalyzes the first step of the pathway by converting D-glyceraldehyde 3-phosphate (G3P) into 3-phospho-D-glyceroyl phosphate. Essential for the maintenance of cellular ATP levels and carbohydrate metabolism (By similarity).</text>
</comment>
<comment type="catalytic activity">
    <reaction evidence="2">
        <text>D-glyceraldehyde 3-phosphate + phosphate + NAD(+) = (2R)-3-phospho-glyceroyl phosphate + NADH + H(+)</text>
        <dbReference type="Rhea" id="RHEA:10300"/>
        <dbReference type="ChEBI" id="CHEBI:15378"/>
        <dbReference type="ChEBI" id="CHEBI:43474"/>
        <dbReference type="ChEBI" id="CHEBI:57540"/>
        <dbReference type="ChEBI" id="CHEBI:57604"/>
        <dbReference type="ChEBI" id="CHEBI:57945"/>
        <dbReference type="ChEBI" id="CHEBI:59776"/>
        <dbReference type="EC" id="1.2.1.12"/>
    </reaction>
</comment>
<comment type="pathway">
    <text>Carbohydrate degradation; glycolysis; pyruvate from D-glyceraldehyde 3-phosphate: step 1/5.</text>
</comment>
<comment type="subunit">
    <text evidence="1">Homotetramer.</text>
</comment>
<comment type="subcellular location">
    <subcellularLocation>
        <location evidence="1">Cytoplasm</location>
    </subcellularLocation>
</comment>
<comment type="similarity">
    <text evidence="3">Belongs to the glyceraldehyde-3-phosphate dehydrogenase family.</text>
</comment>
<sequence>MGKIKIGINGFGRIGRLVARVALQSDDVELVAVNDPFITTEYMTYMFKYDTVHGHWKHSDIKLKDDKTLLFGEKPVTVFGVRNPEEIPWGEAGADYVVESTGVFTDKDKAAAHLKGGAKKVVISAPSKDAPMFVVGVNEDKYTSDVNIVSNASCTTNCLAPLAKVINDNFGIIEGLMTTVHAITATQKTVDGPSSKDWRGGRAASFNIIPSSTGAAKAVGKVLPELNGKLTGMSFRVPTVDVSVVDLTVRTEKAASYDDIKKAIKAASEGKLKGIMGYVEEDLVSTDFVGDSRSSIFDAKAGIALNDHFVKLVSWYDNEWGYSNRVVDLIRHMAKTQ</sequence>